<keyword id="KW-1003">Cell membrane</keyword>
<keyword id="KW-0285">Flavoprotein</keyword>
<keyword id="KW-0288">FMN</keyword>
<keyword id="KW-0472">Membrane</keyword>
<keyword id="KW-0560">Oxidoreductase</keyword>
<keyword id="KW-0665">Pyrimidine biosynthesis</keyword>
<keyword id="KW-1185">Reference proteome</keyword>
<evidence type="ECO:0000255" key="1">
    <source>
        <dbReference type="HAMAP-Rule" id="MF_00225"/>
    </source>
</evidence>
<gene>
    <name evidence="1" type="primary">pyrD</name>
    <name type="ordered locus">MCA1242</name>
</gene>
<name>PYRD_METCA</name>
<feature type="chain" id="PRO_0000148453" description="Dihydroorotate dehydrogenase (quinone)">
    <location>
        <begin position="1"/>
        <end position="340"/>
    </location>
</feature>
<feature type="active site" description="Nucleophile" evidence="1">
    <location>
        <position position="176"/>
    </location>
</feature>
<feature type="binding site" evidence="1">
    <location>
        <begin position="63"/>
        <end position="67"/>
    </location>
    <ligand>
        <name>FMN</name>
        <dbReference type="ChEBI" id="CHEBI:58210"/>
    </ligand>
</feature>
<feature type="binding site" evidence="1">
    <location>
        <position position="67"/>
    </location>
    <ligand>
        <name>substrate</name>
    </ligand>
</feature>
<feature type="binding site" evidence="1">
    <location>
        <position position="87"/>
    </location>
    <ligand>
        <name>FMN</name>
        <dbReference type="ChEBI" id="CHEBI:58210"/>
    </ligand>
</feature>
<feature type="binding site" evidence="1">
    <location>
        <begin position="112"/>
        <end position="116"/>
    </location>
    <ligand>
        <name>substrate</name>
    </ligand>
</feature>
<feature type="binding site" evidence="1">
    <location>
        <position position="140"/>
    </location>
    <ligand>
        <name>FMN</name>
        <dbReference type="ChEBI" id="CHEBI:58210"/>
    </ligand>
</feature>
<feature type="binding site" evidence="1">
    <location>
        <position position="173"/>
    </location>
    <ligand>
        <name>FMN</name>
        <dbReference type="ChEBI" id="CHEBI:58210"/>
    </ligand>
</feature>
<feature type="binding site" evidence="1">
    <location>
        <position position="173"/>
    </location>
    <ligand>
        <name>substrate</name>
    </ligand>
</feature>
<feature type="binding site" evidence="1">
    <location>
        <position position="178"/>
    </location>
    <ligand>
        <name>substrate</name>
    </ligand>
</feature>
<feature type="binding site" evidence="1">
    <location>
        <position position="218"/>
    </location>
    <ligand>
        <name>FMN</name>
        <dbReference type="ChEBI" id="CHEBI:58210"/>
    </ligand>
</feature>
<feature type="binding site" evidence="1">
    <location>
        <position position="246"/>
    </location>
    <ligand>
        <name>FMN</name>
        <dbReference type="ChEBI" id="CHEBI:58210"/>
    </ligand>
</feature>
<feature type="binding site" evidence="1">
    <location>
        <begin position="247"/>
        <end position="248"/>
    </location>
    <ligand>
        <name>substrate</name>
    </ligand>
</feature>
<feature type="binding site" evidence="1">
    <location>
        <position position="269"/>
    </location>
    <ligand>
        <name>FMN</name>
        <dbReference type="ChEBI" id="CHEBI:58210"/>
    </ligand>
</feature>
<feature type="binding site" evidence="1">
    <location>
        <position position="298"/>
    </location>
    <ligand>
        <name>FMN</name>
        <dbReference type="ChEBI" id="CHEBI:58210"/>
    </ligand>
</feature>
<feature type="binding site" evidence="1">
    <location>
        <begin position="319"/>
        <end position="320"/>
    </location>
    <ligand>
        <name>FMN</name>
        <dbReference type="ChEBI" id="CHEBI:58210"/>
    </ligand>
</feature>
<accession>Q609J2</accession>
<reference key="1">
    <citation type="journal article" date="2004" name="PLoS Biol.">
        <title>Genomic insights into methanotrophy: the complete genome sequence of Methylococcus capsulatus (Bath).</title>
        <authorList>
            <person name="Ward N.L."/>
            <person name="Larsen O."/>
            <person name="Sakwa J."/>
            <person name="Bruseth L."/>
            <person name="Khouri H.M."/>
            <person name="Durkin A.S."/>
            <person name="Dimitrov G."/>
            <person name="Jiang L."/>
            <person name="Scanlan D."/>
            <person name="Kang K.H."/>
            <person name="Lewis M.R."/>
            <person name="Nelson K.E."/>
            <person name="Methe B.A."/>
            <person name="Wu M."/>
            <person name="Heidelberg J.F."/>
            <person name="Paulsen I.T."/>
            <person name="Fouts D.E."/>
            <person name="Ravel J."/>
            <person name="Tettelin H."/>
            <person name="Ren Q."/>
            <person name="Read T.D."/>
            <person name="DeBoy R.T."/>
            <person name="Seshadri R."/>
            <person name="Salzberg S.L."/>
            <person name="Jensen H.B."/>
            <person name="Birkeland N.K."/>
            <person name="Nelson W.C."/>
            <person name="Dodson R.J."/>
            <person name="Grindhaug S.H."/>
            <person name="Holt I.E."/>
            <person name="Eidhammer I."/>
            <person name="Jonasen I."/>
            <person name="Vanaken S."/>
            <person name="Utterback T.R."/>
            <person name="Feldblyum T.V."/>
            <person name="Fraser C.M."/>
            <person name="Lillehaug J.R."/>
            <person name="Eisen J.A."/>
        </authorList>
    </citation>
    <scope>NUCLEOTIDE SEQUENCE [LARGE SCALE GENOMIC DNA]</scope>
    <source>
        <strain>ATCC 33009 / NCIMB 11132 / Bath</strain>
    </source>
</reference>
<protein>
    <recommendedName>
        <fullName evidence="1">Dihydroorotate dehydrogenase (quinone)</fullName>
        <ecNumber evidence="1">1.3.5.2</ecNumber>
    </recommendedName>
    <alternativeName>
        <fullName evidence="1">DHOdehase</fullName>
        <shortName evidence="1">DHOD</shortName>
        <shortName evidence="1">DHODase</shortName>
    </alternativeName>
    <alternativeName>
        <fullName evidence="1">Dihydroorotate oxidase</fullName>
    </alternativeName>
</protein>
<dbReference type="EC" id="1.3.5.2" evidence="1"/>
<dbReference type="EMBL" id="AE017282">
    <property type="protein sequence ID" value="AAU92481.1"/>
    <property type="molecule type" value="Genomic_DNA"/>
</dbReference>
<dbReference type="RefSeq" id="WP_010960525.1">
    <property type="nucleotide sequence ID" value="NC_002977.6"/>
</dbReference>
<dbReference type="SMR" id="Q609J2"/>
<dbReference type="STRING" id="243233.MCA1242"/>
<dbReference type="GeneID" id="88223527"/>
<dbReference type="KEGG" id="mca:MCA1242"/>
<dbReference type="eggNOG" id="COG0167">
    <property type="taxonomic scope" value="Bacteria"/>
</dbReference>
<dbReference type="HOGENOM" id="CLU_013640_2_0_6"/>
<dbReference type="UniPathway" id="UPA00070">
    <property type="reaction ID" value="UER00946"/>
</dbReference>
<dbReference type="Proteomes" id="UP000006821">
    <property type="component" value="Chromosome"/>
</dbReference>
<dbReference type="GO" id="GO:0005737">
    <property type="term" value="C:cytoplasm"/>
    <property type="evidence" value="ECO:0007669"/>
    <property type="project" value="InterPro"/>
</dbReference>
<dbReference type="GO" id="GO:0005886">
    <property type="term" value="C:plasma membrane"/>
    <property type="evidence" value="ECO:0007669"/>
    <property type="project" value="UniProtKB-SubCell"/>
</dbReference>
<dbReference type="GO" id="GO:0106430">
    <property type="term" value="F:dihydroorotate dehydrogenase (quinone) activity"/>
    <property type="evidence" value="ECO:0007669"/>
    <property type="project" value="UniProtKB-EC"/>
</dbReference>
<dbReference type="GO" id="GO:0006207">
    <property type="term" value="P:'de novo' pyrimidine nucleobase biosynthetic process"/>
    <property type="evidence" value="ECO:0007669"/>
    <property type="project" value="InterPro"/>
</dbReference>
<dbReference type="GO" id="GO:0044205">
    <property type="term" value="P:'de novo' UMP biosynthetic process"/>
    <property type="evidence" value="ECO:0007669"/>
    <property type="project" value="UniProtKB-UniRule"/>
</dbReference>
<dbReference type="CDD" id="cd04738">
    <property type="entry name" value="DHOD_2_like"/>
    <property type="match status" value="1"/>
</dbReference>
<dbReference type="FunFam" id="3.20.20.70:FF:000028">
    <property type="entry name" value="Dihydroorotate dehydrogenase (quinone)"/>
    <property type="match status" value="1"/>
</dbReference>
<dbReference type="Gene3D" id="3.20.20.70">
    <property type="entry name" value="Aldolase class I"/>
    <property type="match status" value="1"/>
</dbReference>
<dbReference type="HAMAP" id="MF_00225">
    <property type="entry name" value="DHO_dh_type2"/>
    <property type="match status" value="1"/>
</dbReference>
<dbReference type="InterPro" id="IPR013785">
    <property type="entry name" value="Aldolase_TIM"/>
</dbReference>
<dbReference type="InterPro" id="IPR050074">
    <property type="entry name" value="DHO_dehydrogenase"/>
</dbReference>
<dbReference type="InterPro" id="IPR012135">
    <property type="entry name" value="Dihydroorotate_DH_1_2"/>
</dbReference>
<dbReference type="InterPro" id="IPR005719">
    <property type="entry name" value="Dihydroorotate_DH_2"/>
</dbReference>
<dbReference type="InterPro" id="IPR005720">
    <property type="entry name" value="Dihydroorotate_DH_cat"/>
</dbReference>
<dbReference type="InterPro" id="IPR001295">
    <property type="entry name" value="Dihydroorotate_DH_CS"/>
</dbReference>
<dbReference type="NCBIfam" id="NF003644">
    <property type="entry name" value="PRK05286.1-1"/>
    <property type="match status" value="1"/>
</dbReference>
<dbReference type="NCBIfam" id="NF003645">
    <property type="entry name" value="PRK05286.1-2"/>
    <property type="match status" value="1"/>
</dbReference>
<dbReference type="NCBIfam" id="NF003646">
    <property type="entry name" value="PRK05286.1-4"/>
    <property type="match status" value="1"/>
</dbReference>
<dbReference type="NCBIfam" id="NF003652">
    <property type="entry name" value="PRK05286.2-5"/>
    <property type="match status" value="1"/>
</dbReference>
<dbReference type="NCBIfam" id="TIGR01036">
    <property type="entry name" value="pyrD_sub2"/>
    <property type="match status" value="1"/>
</dbReference>
<dbReference type="PANTHER" id="PTHR48109:SF4">
    <property type="entry name" value="DIHYDROOROTATE DEHYDROGENASE (QUINONE), MITOCHONDRIAL"/>
    <property type="match status" value="1"/>
</dbReference>
<dbReference type="PANTHER" id="PTHR48109">
    <property type="entry name" value="DIHYDROOROTATE DEHYDROGENASE (QUINONE), MITOCHONDRIAL-RELATED"/>
    <property type="match status" value="1"/>
</dbReference>
<dbReference type="Pfam" id="PF01180">
    <property type="entry name" value="DHO_dh"/>
    <property type="match status" value="1"/>
</dbReference>
<dbReference type="PIRSF" id="PIRSF000164">
    <property type="entry name" value="DHO_oxidase"/>
    <property type="match status" value="1"/>
</dbReference>
<dbReference type="SUPFAM" id="SSF51395">
    <property type="entry name" value="FMN-linked oxidoreductases"/>
    <property type="match status" value="1"/>
</dbReference>
<dbReference type="PROSITE" id="PS00911">
    <property type="entry name" value="DHODEHASE_1"/>
    <property type="match status" value="1"/>
</dbReference>
<dbReference type="PROSITE" id="PS00912">
    <property type="entry name" value="DHODEHASE_2"/>
    <property type="match status" value="1"/>
</dbReference>
<organism>
    <name type="scientific">Methylococcus capsulatus (strain ATCC 33009 / NCIMB 11132 / Bath)</name>
    <dbReference type="NCBI Taxonomy" id="243233"/>
    <lineage>
        <taxon>Bacteria</taxon>
        <taxon>Pseudomonadati</taxon>
        <taxon>Pseudomonadota</taxon>
        <taxon>Gammaproteobacteria</taxon>
        <taxon>Methylococcales</taxon>
        <taxon>Methylococcaceae</taxon>
        <taxon>Methylococcus</taxon>
    </lineage>
</organism>
<sequence>MIYENLLRPLLFRLDPETAHELSLSALRLAAKLGPANPLKQSLPTSPRTVMGLEFPNPIGLAAGLDKNGDCIDGLAALGFGFLEIGTVTPRPQPGNPRPRLFRVPEAGALVNRMGFNNSGVAHLIARVRQTRYRGILGINIGKNLTTPVERALDDYREGLKAVYPYAHYVTLNVSSPNTPGLRSLQFGALLDELLDGLMGEREELTAQHGKRVPLALKVAPDMDSREIKALAGAVVRHGVDAVIATNTTASRDGVEGLEHADEAGGLSGKPLFLRSTEVVARLADALQGRAPIIACGGVFSGADAVAKFEAGASLVQVYTGFIYRGPALLAEIGRVVAAL</sequence>
<proteinExistence type="inferred from homology"/>
<comment type="function">
    <text evidence="1">Catalyzes the conversion of dihydroorotate to orotate with quinone as electron acceptor.</text>
</comment>
<comment type="catalytic activity">
    <reaction evidence="1">
        <text>(S)-dihydroorotate + a quinone = orotate + a quinol</text>
        <dbReference type="Rhea" id="RHEA:30187"/>
        <dbReference type="ChEBI" id="CHEBI:24646"/>
        <dbReference type="ChEBI" id="CHEBI:30839"/>
        <dbReference type="ChEBI" id="CHEBI:30864"/>
        <dbReference type="ChEBI" id="CHEBI:132124"/>
        <dbReference type="EC" id="1.3.5.2"/>
    </reaction>
</comment>
<comment type="cofactor">
    <cofactor evidence="1">
        <name>FMN</name>
        <dbReference type="ChEBI" id="CHEBI:58210"/>
    </cofactor>
    <text evidence="1">Binds 1 FMN per subunit.</text>
</comment>
<comment type="pathway">
    <text evidence="1">Pyrimidine metabolism; UMP biosynthesis via de novo pathway; orotate from (S)-dihydroorotate (quinone route): step 1/1.</text>
</comment>
<comment type="subunit">
    <text evidence="1">Monomer.</text>
</comment>
<comment type="subcellular location">
    <subcellularLocation>
        <location evidence="1">Cell membrane</location>
        <topology evidence="1">Peripheral membrane protein</topology>
    </subcellularLocation>
</comment>
<comment type="similarity">
    <text evidence="1">Belongs to the dihydroorotate dehydrogenase family. Type 2 subfamily.</text>
</comment>